<dbReference type="EC" id="3.1.25.-"/>
<dbReference type="EMBL" id="AL513382">
    <property type="protein sequence ID" value="CAD02045.1"/>
    <property type="status" value="ALT_INIT"/>
    <property type="molecule type" value="Genomic_DNA"/>
</dbReference>
<dbReference type="EMBL" id="AE014613">
    <property type="protein sequence ID" value="AAO68844.1"/>
    <property type="status" value="ALT_INIT"/>
    <property type="molecule type" value="Genomic_DNA"/>
</dbReference>
<dbReference type="PIR" id="AD0709">
    <property type="entry name" value="AD0709"/>
</dbReference>
<dbReference type="RefSeq" id="NP_456203.1">
    <property type="nucleotide sequence ID" value="NC_003198.1"/>
</dbReference>
<dbReference type="RefSeq" id="WP_001518228.1">
    <property type="nucleotide sequence ID" value="NZ_WSUR01000034.1"/>
</dbReference>
<dbReference type="SMR" id="Q8Z6G5"/>
<dbReference type="STRING" id="220341.gene:17585737"/>
<dbReference type="KEGG" id="stt:t1188"/>
<dbReference type="KEGG" id="sty:STY1804"/>
<dbReference type="PATRIC" id="fig|220341.7.peg.1817"/>
<dbReference type="eggNOG" id="COG0322">
    <property type="taxonomic scope" value="Bacteria"/>
</dbReference>
<dbReference type="HOGENOM" id="CLU_054721_1_0_6"/>
<dbReference type="OMA" id="RVMSHFR"/>
<dbReference type="Proteomes" id="UP000000541">
    <property type="component" value="Chromosome"/>
</dbReference>
<dbReference type="Proteomes" id="UP000002670">
    <property type="component" value="Chromosome"/>
</dbReference>
<dbReference type="GO" id="GO:0009380">
    <property type="term" value="C:excinuclease repair complex"/>
    <property type="evidence" value="ECO:0007669"/>
    <property type="project" value="TreeGrafter"/>
</dbReference>
<dbReference type="GO" id="GO:0004518">
    <property type="term" value="F:nuclease activity"/>
    <property type="evidence" value="ECO:0007669"/>
    <property type="project" value="UniProtKB-KW"/>
</dbReference>
<dbReference type="GO" id="GO:0006289">
    <property type="term" value="P:nucleotide-excision repair"/>
    <property type="evidence" value="ECO:0007669"/>
    <property type="project" value="InterPro"/>
</dbReference>
<dbReference type="GO" id="GO:0009432">
    <property type="term" value="P:SOS response"/>
    <property type="evidence" value="ECO:0007669"/>
    <property type="project" value="UniProtKB-KW"/>
</dbReference>
<dbReference type="CDD" id="cd10434">
    <property type="entry name" value="GIY-YIG_UvrC_Cho"/>
    <property type="match status" value="1"/>
</dbReference>
<dbReference type="FunFam" id="3.40.1440.10:FF:000004">
    <property type="entry name" value="UV-repair endonuclease Cho"/>
    <property type="match status" value="1"/>
</dbReference>
<dbReference type="Gene3D" id="3.40.1440.10">
    <property type="entry name" value="GIY-YIG endonuclease"/>
    <property type="match status" value="1"/>
</dbReference>
<dbReference type="InterPro" id="IPR000305">
    <property type="entry name" value="GIY-YIG_endonuc"/>
</dbReference>
<dbReference type="InterPro" id="IPR035901">
    <property type="entry name" value="GIY-YIG_endonuc_sf"/>
</dbReference>
<dbReference type="InterPro" id="IPR047296">
    <property type="entry name" value="GIY-YIG_UvrC_Cho"/>
</dbReference>
<dbReference type="InterPro" id="IPR050066">
    <property type="entry name" value="UvrABC_protein_C"/>
</dbReference>
<dbReference type="NCBIfam" id="NF007833">
    <property type="entry name" value="PRK10545.1"/>
    <property type="match status" value="1"/>
</dbReference>
<dbReference type="PANTHER" id="PTHR30562:SF10">
    <property type="entry name" value="EXCINUCLEASE CHO"/>
    <property type="match status" value="1"/>
</dbReference>
<dbReference type="PANTHER" id="PTHR30562">
    <property type="entry name" value="UVRC/OXIDOREDUCTASE"/>
    <property type="match status" value="1"/>
</dbReference>
<dbReference type="SMART" id="SM00465">
    <property type="entry name" value="GIYc"/>
    <property type="match status" value="1"/>
</dbReference>
<dbReference type="SUPFAM" id="SSF82771">
    <property type="entry name" value="GIY-YIG endonuclease"/>
    <property type="match status" value="1"/>
</dbReference>
<dbReference type="PROSITE" id="PS50164">
    <property type="entry name" value="GIY_YIG"/>
    <property type="match status" value="1"/>
</dbReference>
<accession>Q8Z6G5</accession>
<feature type="chain" id="PRO_0000138373" description="Excinuclease cho">
    <location>
        <begin position="1"/>
        <end position="293"/>
    </location>
</feature>
<feature type="domain" description="GIY-YIG" evidence="2">
    <location>
        <begin position="33"/>
        <end position="108"/>
    </location>
</feature>
<gene>
    <name type="primary">cho</name>
    <name type="ordered locus">STY1804</name>
    <name type="ordered locus">t1188</name>
</gene>
<keyword id="KW-0227">DNA damage</keyword>
<keyword id="KW-0228">DNA excision</keyword>
<keyword id="KW-0234">DNA repair</keyword>
<keyword id="KW-0267">Excision nuclease</keyword>
<keyword id="KW-0378">Hydrolase</keyword>
<keyword id="KW-0742">SOS response</keyword>
<name>CHO_SALTI</name>
<protein>
    <recommendedName>
        <fullName>Excinuclease cho</fullName>
        <ecNumber>3.1.25.-</ecNumber>
    </recommendedName>
    <alternativeName>
        <fullName>Endonuclease cho</fullName>
    </alternativeName>
    <alternativeName>
        <fullName>UvrC homolog protein</fullName>
    </alternativeName>
</protein>
<evidence type="ECO:0000250" key="1"/>
<evidence type="ECO:0000255" key="2">
    <source>
        <dbReference type="PROSITE-ProRule" id="PRU00977"/>
    </source>
</evidence>
<evidence type="ECO:0000305" key="3"/>
<sequence length="293" mass="33333">MVRRQSAPRLEFEAAAIYEYPEHLRPFLSEAPALPGVYIFHSESDTLPLYIGKSVNIRSRVLSHLRTPDEAAMLRQARRISWICTAGEMGALLLEARLIKEQQPLFNKRLRRNRQLCSLQLSEQKIEVVSARSVDFSHEPNLFGLFANRRAALQSLQNLADEQKLCYGLLGLEPVSRGRACFRFALKRCAGACCGQETPQAHFLRLQASLERLRVVCWPWKGAIALKESRPQMTQFHIINNWLWLGAVPSLDEAATLVRTPAGFDQDGYKILCKPLMSGQYEIIELHTDCRQS</sequence>
<proteinExistence type="inferred from homology"/>
<reference key="1">
    <citation type="journal article" date="2001" name="Nature">
        <title>Complete genome sequence of a multiple drug resistant Salmonella enterica serovar Typhi CT18.</title>
        <authorList>
            <person name="Parkhill J."/>
            <person name="Dougan G."/>
            <person name="James K.D."/>
            <person name="Thomson N.R."/>
            <person name="Pickard D."/>
            <person name="Wain J."/>
            <person name="Churcher C.M."/>
            <person name="Mungall K.L."/>
            <person name="Bentley S.D."/>
            <person name="Holden M.T.G."/>
            <person name="Sebaihia M."/>
            <person name="Baker S."/>
            <person name="Basham D."/>
            <person name="Brooks K."/>
            <person name="Chillingworth T."/>
            <person name="Connerton P."/>
            <person name="Cronin A."/>
            <person name="Davis P."/>
            <person name="Davies R.M."/>
            <person name="Dowd L."/>
            <person name="White N."/>
            <person name="Farrar J."/>
            <person name="Feltwell T."/>
            <person name="Hamlin N."/>
            <person name="Haque A."/>
            <person name="Hien T.T."/>
            <person name="Holroyd S."/>
            <person name="Jagels K."/>
            <person name="Krogh A."/>
            <person name="Larsen T.S."/>
            <person name="Leather S."/>
            <person name="Moule S."/>
            <person name="O'Gaora P."/>
            <person name="Parry C."/>
            <person name="Quail M.A."/>
            <person name="Rutherford K.M."/>
            <person name="Simmonds M."/>
            <person name="Skelton J."/>
            <person name="Stevens K."/>
            <person name="Whitehead S."/>
            <person name="Barrell B.G."/>
        </authorList>
    </citation>
    <scope>NUCLEOTIDE SEQUENCE [LARGE SCALE GENOMIC DNA]</scope>
    <source>
        <strain>CT18</strain>
    </source>
</reference>
<reference key="2">
    <citation type="journal article" date="2003" name="J. Bacteriol.">
        <title>Comparative genomics of Salmonella enterica serovar Typhi strains Ty2 and CT18.</title>
        <authorList>
            <person name="Deng W."/>
            <person name="Liou S.-R."/>
            <person name="Plunkett G. III"/>
            <person name="Mayhew G.F."/>
            <person name="Rose D.J."/>
            <person name="Burland V."/>
            <person name="Kodoyianni V."/>
            <person name="Schwartz D.C."/>
            <person name="Blattner F.R."/>
        </authorList>
    </citation>
    <scope>NUCLEOTIDE SEQUENCE [LARGE SCALE GENOMIC DNA]</scope>
    <source>
        <strain>ATCC 700931 / Ty2</strain>
    </source>
</reference>
<organism>
    <name type="scientific">Salmonella typhi</name>
    <dbReference type="NCBI Taxonomy" id="90370"/>
    <lineage>
        <taxon>Bacteria</taxon>
        <taxon>Pseudomonadati</taxon>
        <taxon>Pseudomonadota</taxon>
        <taxon>Gammaproteobacteria</taxon>
        <taxon>Enterobacterales</taxon>
        <taxon>Enterobacteriaceae</taxon>
        <taxon>Salmonella</taxon>
    </lineage>
</organism>
<comment type="function">
    <text evidence="1">Incises the DNA at the 3' side of a lesion during nucleotide excision repair. Incises the DNA farther away from the lesion than UvrC. Not able to incise the 5' site of a lesion. When a lesion remains because UvrC is not able to induce the 3' incision, Cho incises the DNA. Then UvrC makes the 5' incision. The combined action of Cho and UvrC broadens the substrate range of nucleotide excision repair (By similarity).</text>
</comment>
<comment type="sequence caution" evidence="3">
    <conflict type="erroneous initiation">
        <sequence resource="EMBL-CDS" id="AAO68844"/>
    </conflict>
</comment>
<comment type="sequence caution" evidence="3">
    <conflict type="erroneous initiation">
        <sequence resource="EMBL-CDS" id="CAD02045"/>
    </conflict>
</comment>